<reference key="1">
    <citation type="journal article" date="2006" name="PLoS Genet.">
        <title>The complete genome sequence and comparative genome analysis of the high pathogenicity Yersinia enterocolitica strain 8081.</title>
        <authorList>
            <person name="Thomson N.R."/>
            <person name="Howard S."/>
            <person name="Wren B.W."/>
            <person name="Holden M.T.G."/>
            <person name="Crossman L."/>
            <person name="Challis G.L."/>
            <person name="Churcher C."/>
            <person name="Mungall K."/>
            <person name="Brooks K."/>
            <person name="Chillingworth T."/>
            <person name="Feltwell T."/>
            <person name="Abdellah Z."/>
            <person name="Hauser H."/>
            <person name="Jagels K."/>
            <person name="Maddison M."/>
            <person name="Moule S."/>
            <person name="Sanders M."/>
            <person name="Whitehead S."/>
            <person name="Quail M.A."/>
            <person name="Dougan G."/>
            <person name="Parkhill J."/>
            <person name="Prentice M.B."/>
        </authorList>
    </citation>
    <scope>NUCLEOTIDE SEQUENCE [LARGE SCALE GENOMIC DNA]</scope>
    <source>
        <strain>NCTC 13174 / 8081</strain>
    </source>
</reference>
<sequence length="624" mass="71025">MSMKGQETRGFQSEVKQLLHLMIHSLYSNKEIFLRELISNASDAADKLRFRALSHPELFEGDGELRVRLSFDKEKRTLTLSDNGIGMSREEVIDNLGTIAKSGTKAFLESIGSDQAKDSQLIGQFGVGFYSAFIVADKVTVRTRAAGAPADAGVFWESAGEGDYTIADITKEDRGTEITLHLREGEDEYLDNWRLRSVISKYSDHIALPVEIESKNEEDGTVTWEKINKAQALWTRGKAEITDDEYKAFYKHIAHDFTDPLIWSHNRVEGKQEYTSLLYIPAQAPWDMWNRDHKHGLKLYVQRVFIMDDAEQFMPNYLRFVRGLIDSNDLPLNVSREILQDSRVTQNLRSALTKRVLQMLEKLAKDDAEKYQQFWQQFGMALKEGPAEDGSNKDTIAKLLRFASTHTDSSAQTVSLEDYVSRMAEGQEKIYYITADSYAAAKNSPHLELFRKKGIEVLLLSDRIDEWMMSYLTEFDGKAFQSVSKADDSLNKLADEERPEQQEADKALEPFVERVKTLLGERVKDVRLTHRLTDTPAIVTTDADEMSTQMAKLFAAAGQQAPEVKYIFELNPEHSLVKRAADVADDTQFAEWVELLLDQALLAERGTLEDPNQFIRRMNQLLTA</sequence>
<gene>
    <name evidence="1" type="primary">htpG</name>
    <name type="ordered locus">YE3090</name>
</gene>
<feature type="chain" id="PRO_1000014965" description="Chaperone protein HtpG">
    <location>
        <begin position="1"/>
        <end position="624"/>
    </location>
</feature>
<feature type="region of interest" description="A; substrate-binding" evidence="1">
    <location>
        <begin position="1"/>
        <end position="336"/>
    </location>
</feature>
<feature type="region of interest" description="B" evidence="1">
    <location>
        <begin position="337"/>
        <end position="552"/>
    </location>
</feature>
<feature type="region of interest" description="C" evidence="1">
    <location>
        <begin position="553"/>
        <end position="624"/>
    </location>
</feature>
<evidence type="ECO:0000255" key="1">
    <source>
        <dbReference type="HAMAP-Rule" id="MF_00505"/>
    </source>
</evidence>
<organism>
    <name type="scientific">Yersinia enterocolitica serotype O:8 / biotype 1B (strain NCTC 13174 / 8081)</name>
    <dbReference type="NCBI Taxonomy" id="393305"/>
    <lineage>
        <taxon>Bacteria</taxon>
        <taxon>Pseudomonadati</taxon>
        <taxon>Pseudomonadota</taxon>
        <taxon>Gammaproteobacteria</taxon>
        <taxon>Enterobacterales</taxon>
        <taxon>Yersiniaceae</taxon>
        <taxon>Yersinia</taxon>
    </lineage>
</organism>
<comment type="function">
    <text evidence="1">Molecular chaperone. Has ATPase activity.</text>
</comment>
<comment type="subunit">
    <text evidence="1">Homodimer.</text>
</comment>
<comment type="subcellular location">
    <subcellularLocation>
        <location evidence="1">Cytoplasm</location>
    </subcellularLocation>
</comment>
<comment type="similarity">
    <text evidence="1">Belongs to the heat shock protein 90 family.</text>
</comment>
<keyword id="KW-0067">ATP-binding</keyword>
<keyword id="KW-0143">Chaperone</keyword>
<keyword id="KW-0963">Cytoplasm</keyword>
<keyword id="KW-0547">Nucleotide-binding</keyword>
<keyword id="KW-0346">Stress response</keyword>
<name>HTPG_YERE8</name>
<dbReference type="EMBL" id="AM286415">
    <property type="protein sequence ID" value="CAL13125.1"/>
    <property type="molecule type" value="Genomic_DNA"/>
</dbReference>
<dbReference type="RefSeq" id="YP_001007272.1">
    <property type="nucleotide sequence ID" value="NC_008800.1"/>
</dbReference>
<dbReference type="SMR" id="A1JNB3"/>
<dbReference type="KEGG" id="yen:YE3090"/>
<dbReference type="PATRIC" id="fig|393305.7.peg.3288"/>
<dbReference type="eggNOG" id="COG0326">
    <property type="taxonomic scope" value="Bacteria"/>
</dbReference>
<dbReference type="HOGENOM" id="CLU_006684_3_0_6"/>
<dbReference type="OrthoDB" id="9802640at2"/>
<dbReference type="Proteomes" id="UP000000642">
    <property type="component" value="Chromosome"/>
</dbReference>
<dbReference type="GO" id="GO:0005737">
    <property type="term" value="C:cytoplasm"/>
    <property type="evidence" value="ECO:0007669"/>
    <property type="project" value="UniProtKB-SubCell"/>
</dbReference>
<dbReference type="GO" id="GO:0005524">
    <property type="term" value="F:ATP binding"/>
    <property type="evidence" value="ECO:0007669"/>
    <property type="project" value="UniProtKB-UniRule"/>
</dbReference>
<dbReference type="GO" id="GO:0016887">
    <property type="term" value="F:ATP hydrolysis activity"/>
    <property type="evidence" value="ECO:0007669"/>
    <property type="project" value="InterPro"/>
</dbReference>
<dbReference type="GO" id="GO:0140662">
    <property type="term" value="F:ATP-dependent protein folding chaperone"/>
    <property type="evidence" value="ECO:0007669"/>
    <property type="project" value="InterPro"/>
</dbReference>
<dbReference type="GO" id="GO:0051082">
    <property type="term" value="F:unfolded protein binding"/>
    <property type="evidence" value="ECO:0007669"/>
    <property type="project" value="UniProtKB-UniRule"/>
</dbReference>
<dbReference type="CDD" id="cd16927">
    <property type="entry name" value="HATPase_Hsp90-like"/>
    <property type="match status" value="1"/>
</dbReference>
<dbReference type="FunFam" id="1.20.120.790:FF:000002">
    <property type="entry name" value="Molecular chaperone HtpG"/>
    <property type="match status" value="1"/>
</dbReference>
<dbReference type="FunFam" id="3.30.230.80:FF:000002">
    <property type="entry name" value="Molecular chaperone HtpG"/>
    <property type="match status" value="1"/>
</dbReference>
<dbReference type="FunFam" id="3.30.565.10:FF:000009">
    <property type="entry name" value="Molecular chaperone HtpG"/>
    <property type="match status" value="1"/>
</dbReference>
<dbReference type="FunFam" id="3.40.50.11260:FF:000002">
    <property type="entry name" value="Molecular chaperone HtpG"/>
    <property type="match status" value="1"/>
</dbReference>
<dbReference type="Gene3D" id="3.30.230.80">
    <property type="match status" value="1"/>
</dbReference>
<dbReference type="Gene3D" id="3.40.50.11260">
    <property type="match status" value="1"/>
</dbReference>
<dbReference type="Gene3D" id="1.20.120.790">
    <property type="entry name" value="Heat shock protein 90, C-terminal domain"/>
    <property type="match status" value="1"/>
</dbReference>
<dbReference type="Gene3D" id="3.30.565.10">
    <property type="entry name" value="Histidine kinase-like ATPase, C-terminal domain"/>
    <property type="match status" value="1"/>
</dbReference>
<dbReference type="HAMAP" id="MF_00505">
    <property type="entry name" value="HSP90"/>
    <property type="match status" value="1"/>
</dbReference>
<dbReference type="InterPro" id="IPR036890">
    <property type="entry name" value="HATPase_C_sf"/>
</dbReference>
<dbReference type="InterPro" id="IPR019805">
    <property type="entry name" value="Heat_shock_protein_90_CS"/>
</dbReference>
<dbReference type="InterPro" id="IPR037196">
    <property type="entry name" value="HSP90_C"/>
</dbReference>
<dbReference type="InterPro" id="IPR001404">
    <property type="entry name" value="Hsp90_fam"/>
</dbReference>
<dbReference type="InterPro" id="IPR020575">
    <property type="entry name" value="Hsp90_N"/>
</dbReference>
<dbReference type="InterPro" id="IPR020568">
    <property type="entry name" value="Ribosomal_Su5_D2-typ_SF"/>
</dbReference>
<dbReference type="NCBIfam" id="NF003555">
    <property type="entry name" value="PRK05218.1"/>
    <property type="match status" value="1"/>
</dbReference>
<dbReference type="PANTHER" id="PTHR11528">
    <property type="entry name" value="HEAT SHOCK PROTEIN 90 FAMILY MEMBER"/>
    <property type="match status" value="1"/>
</dbReference>
<dbReference type="Pfam" id="PF13589">
    <property type="entry name" value="HATPase_c_3"/>
    <property type="match status" value="1"/>
</dbReference>
<dbReference type="Pfam" id="PF00183">
    <property type="entry name" value="HSP90"/>
    <property type="match status" value="1"/>
</dbReference>
<dbReference type="PIRSF" id="PIRSF002583">
    <property type="entry name" value="Hsp90"/>
    <property type="match status" value="1"/>
</dbReference>
<dbReference type="PRINTS" id="PR00775">
    <property type="entry name" value="HEATSHOCK90"/>
</dbReference>
<dbReference type="SMART" id="SM00387">
    <property type="entry name" value="HATPase_c"/>
    <property type="match status" value="1"/>
</dbReference>
<dbReference type="SUPFAM" id="SSF55874">
    <property type="entry name" value="ATPase domain of HSP90 chaperone/DNA topoisomerase II/histidine kinase"/>
    <property type="match status" value="1"/>
</dbReference>
<dbReference type="SUPFAM" id="SSF110942">
    <property type="entry name" value="HSP90 C-terminal domain"/>
    <property type="match status" value="1"/>
</dbReference>
<dbReference type="SUPFAM" id="SSF54211">
    <property type="entry name" value="Ribosomal protein S5 domain 2-like"/>
    <property type="match status" value="1"/>
</dbReference>
<dbReference type="PROSITE" id="PS00298">
    <property type="entry name" value="HSP90"/>
    <property type="match status" value="1"/>
</dbReference>
<accession>A1JNB3</accession>
<proteinExistence type="inferred from homology"/>
<protein>
    <recommendedName>
        <fullName evidence="1">Chaperone protein HtpG</fullName>
    </recommendedName>
    <alternativeName>
        <fullName evidence="1">Heat shock protein HtpG</fullName>
    </alternativeName>
    <alternativeName>
        <fullName evidence="1">High temperature protein G</fullName>
    </alternativeName>
</protein>